<organism>
    <name type="scientific">Pseudomonas fluorescens (strain SBW25)</name>
    <dbReference type="NCBI Taxonomy" id="216595"/>
    <lineage>
        <taxon>Bacteria</taxon>
        <taxon>Pseudomonadati</taxon>
        <taxon>Pseudomonadota</taxon>
        <taxon>Gammaproteobacteria</taxon>
        <taxon>Pseudomonadales</taxon>
        <taxon>Pseudomonadaceae</taxon>
        <taxon>Pseudomonas</taxon>
    </lineage>
</organism>
<proteinExistence type="inferred from homology"/>
<dbReference type="EC" id="4.2.1.59" evidence="1"/>
<dbReference type="EC" id="5.3.3.14" evidence="1"/>
<dbReference type="EMBL" id="AM181176">
    <property type="protein sequence ID" value="CAY48083.1"/>
    <property type="molecule type" value="Genomic_DNA"/>
</dbReference>
<dbReference type="RefSeq" id="WP_010211704.1">
    <property type="nucleotide sequence ID" value="NC_012660.1"/>
</dbReference>
<dbReference type="SMR" id="C3K743"/>
<dbReference type="STRING" id="294.SRM1_04158"/>
<dbReference type="GeneID" id="93463527"/>
<dbReference type="eggNOG" id="COG0764">
    <property type="taxonomic scope" value="Bacteria"/>
</dbReference>
<dbReference type="HOGENOM" id="CLU_097925_0_0_6"/>
<dbReference type="OrthoDB" id="9786735at2"/>
<dbReference type="UniPathway" id="UPA00094"/>
<dbReference type="GO" id="GO:0005737">
    <property type="term" value="C:cytoplasm"/>
    <property type="evidence" value="ECO:0007669"/>
    <property type="project" value="UniProtKB-SubCell"/>
</dbReference>
<dbReference type="GO" id="GO:0019171">
    <property type="term" value="F:(3R)-hydroxyacyl-[acyl-carrier-protein] dehydratase activity"/>
    <property type="evidence" value="ECO:0007669"/>
    <property type="project" value="UniProtKB-UniRule"/>
</dbReference>
<dbReference type="GO" id="GO:0034017">
    <property type="term" value="F:trans-2-decenoyl-acyl-carrier-protein isomerase activity"/>
    <property type="evidence" value="ECO:0007669"/>
    <property type="project" value="UniProtKB-UniRule"/>
</dbReference>
<dbReference type="GO" id="GO:0006636">
    <property type="term" value="P:unsaturated fatty acid biosynthetic process"/>
    <property type="evidence" value="ECO:0007669"/>
    <property type="project" value="UniProtKB-UniRule"/>
</dbReference>
<dbReference type="CDD" id="cd01287">
    <property type="entry name" value="FabA"/>
    <property type="match status" value="1"/>
</dbReference>
<dbReference type="Gene3D" id="3.10.129.10">
    <property type="entry name" value="Hotdog Thioesterase"/>
    <property type="match status" value="1"/>
</dbReference>
<dbReference type="HAMAP" id="MF_00405">
    <property type="entry name" value="FabA"/>
    <property type="match status" value="1"/>
</dbReference>
<dbReference type="InterPro" id="IPR010083">
    <property type="entry name" value="FabA"/>
</dbReference>
<dbReference type="InterPro" id="IPR013114">
    <property type="entry name" value="FabA_FabZ"/>
</dbReference>
<dbReference type="InterPro" id="IPR029069">
    <property type="entry name" value="HotDog_dom_sf"/>
</dbReference>
<dbReference type="NCBIfam" id="TIGR01749">
    <property type="entry name" value="fabA"/>
    <property type="match status" value="1"/>
</dbReference>
<dbReference type="NCBIfam" id="NF003509">
    <property type="entry name" value="PRK05174.1"/>
    <property type="match status" value="1"/>
</dbReference>
<dbReference type="PANTHER" id="PTHR30272">
    <property type="entry name" value="3-HYDROXYACYL-[ACYL-CARRIER-PROTEIN] DEHYDRATASE"/>
    <property type="match status" value="1"/>
</dbReference>
<dbReference type="PANTHER" id="PTHR30272:SF8">
    <property type="entry name" value="3-HYDROXYDECANOYL-[ACYL-CARRIER-PROTEIN] DEHYDRATASE"/>
    <property type="match status" value="1"/>
</dbReference>
<dbReference type="Pfam" id="PF07977">
    <property type="entry name" value="FabA"/>
    <property type="match status" value="1"/>
</dbReference>
<dbReference type="SUPFAM" id="SSF54637">
    <property type="entry name" value="Thioesterase/thiol ester dehydrase-isomerase"/>
    <property type="match status" value="1"/>
</dbReference>
<comment type="function">
    <text evidence="1">Necessary for the introduction of cis unsaturation into fatty acids. Catalyzes the dehydration of (3R)-3-hydroxydecanoyl-ACP to E-(2)-decenoyl-ACP and then its isomerization to Z-(3)-decenoyl-ACP. Can catalyze the dehydratase reaction for beta-hydroxyacyl-ACPs with saturated chain lengths up to 16:0, being most active on intermediate chain length.</text>
</comment>
<comment type="catalytic activity">
    <reaction evidence="1">
        <text>a (3R)-hydroxyacyl-[ACP] = a (2E)-enoyl-[ACP] + H2O</text>
        <dbReference type="Rhea" id="RHEA:13097"/>
        <dbReference type="Rhea" id="RHEA-COMP:9925"/>
        <dbReference type="Rhea" id="RHEA-COMP:9945"/>
        <dbReference type="ChEBI" id="CHEBI:15377"/>
        <dbReference type="ChEBI" id="CHEBI:78784"/>
        <dbReference type="ChEBI" id="CHEBI:78827"/>
        <dbReference type="EC" id="4.2.1.59"/>
    </reaction>
</comment>
<comment type="catalytic activity">
    <reaction evidence="1">
        <text>(3R)-hydroxydecanoyl-[ACP] = (2E)-decenoyl-[ACP] + H2O</text>
        <dbReference type="Rhea" id="RHEA:41860"/>
        <dbReference type="Rhea" id="RHEA-COMP:9638"/>
        <dbReference type="Rhea" id="RHEA-COMP:9639"/>
        <dbReference type="ChEBI" id="CHEBI:15377"/>
        <dbReference type="ChEBI" id="CHEBI:78466"/>
        <dbReference type="ChEBI" id="CHEBI:78467"/>
    </reaction>
</comment>
<comment type="catalytic activity">
    <reaction evidence="1">
        <text>(2E)-decenoyl-[ACP] = (3Z)-decenoyl-[ACP]</text>
        <dbReference type="Rhea" id="RHEA:23568"/>
        <dbReference type="Rhea" id="RHEA-COMP:9639"/>
        <dbReference type="Rhea" id="RHEA-COMP:9927"/>
        <dbReference type="ChEBI" id="CHEBI:78467"/>
        <dbReference type="ChEBI" id="CHEBI:78798"/>
        <dbReference type="EC" id="5.3.3.14"/>
    </reaction>
</comment>
<comment type="pathway">
    <text evidence="1">Lipid metabolism; fatty acid biosynthesis.</text>
</comment>
<comment type="subunit">
    <text evidence="1">Homodimer.</text>
</comment>
<comment type="subcellular location">
    <subcellularLocation>
        <location evidence="1">Cytoplasm</location>
    </subcellularLocation>
</comment>
<comment type="similarity">
    <text evidence="1">Belongs to the thioester dehydratase family. FabA subfamily.</text>
</comment>
<sequence>MTKQNAFTREDLLRCSRGELFGPGNAQLPAPNMLMVDRITHISEEGGKYGKGELVAELDITPDLWFFACHFEGDPVMPGCLGLDAMWQLVGFFLGWQGLPGRGRALGSGEVKFFGQVLPTAKKVTYNIQIKRVLKGKLNLAIADGSVSVDGREIYTAEGLRVGVFTSTDNF</sequence>
<protein>
    <recommendedName>
        <fullName evidence="1">3-hydroxydecanoyl-[acyl-carrier-protein] dehydratase</fullName>
        <ecNumber evidence="1">4.2.1.59</ecNumber>
    </recommendedName>
    <alternativeName>
        <fullName evidence="1">3-hydroxyacyl-[acyl-carrier-protein] dehydratase FabA</fullName>
    </alternativeName>
    <alternativeName>
        <fullName evidence="1">Beta-hydroxydecanoyl thioester dehydrase</fullName>
    </alternativeName>
    <alternativeName>
        <fullName evidence="1">Trans-2-decenoyl-[acyl-carrier-protein] isomerase</fullName>
        <ecNumber evidence="1">5.3.3.14</ecNumber>
    </alternativeName>
</protein>
<keyword id="KW-0963">Cytoplasm</keyword>
<keyword id="KW-0275">Fatty acid biosynthesis</keyword>
<keyword id="KW-0276">Fatty acid metabolism</keyword>
<keyword id="KW-0413">Isomerase</keyword>
<keyword id="KW-0444">Lipid biosynthesis</keyword>
<keyword id="KW-0443">Lipid metabolism</keyword>
<keyword id="KW-0456">Lyase</keyword>
<gene>
    <name evidence="1" type="primary">fabA</name>
    <name type="ordered locus">PFLU_1836</name>
</gene>
<feature type="chain" id="PRO_1000205936" description="3-hydroxydecanoyl-[acyl-carrier-protein] dehydratase">
    <location>
        <begin position="1"/>
        <end position="171"/>
    </location>
</feature>
<feature type="active site" evidence="1">
    <location>
        <position position="70"/>
    </location>
</feature>
<reference key="1">
    <citation type="journal article" date="2009" name="Genome Biol.">
        <title>Genomic and genetic analyses of diversity and plant interactions of Pseudomonas fluorescens.</title>
        <authorList>
            <person name="Silby M.W."/>
            <person name="Cerdeno-Tarraga A.M."/>
            <person name="Vernikos G.S."/>
            <person name="Giddens S.R."/>
            <person name="Jackson R.W."/>
            <person name="Preston G.M."/>
            <person name="Zhang X.-X."/>
            <person name="Moon C.D."/>
            <person name="Gehrig S.M."/>
            <person name="Godfrey S.A.C."/>
            <person name="Knight C.G."/>
            <person name="Malone J.G."/>
            <person name="Robinson Z."/>
            <person name="Spiers A.J."/>
            <person name="Harris S."/>
            <person name="Challis G.L."/>
            <person name="Yaxley A.M."/>
            <person name="Harris D."/>
            <person name="Seeger K."/>
            <person name="Murphy L."/>
            <person name="Rutter S."/>
            <person name="Squares R."/>
            <person name="Quail M.A."/>
            <person name="Saunders E."/>
            <person name="Mavromatis K."/>
            <person name="Brettin T.S."/>
            <person name="Bentley S.D."/>
            <person name="Hothersall J."/>
            <person name="Stephens E."/>
            <person name="Thomas C.M."/>
            <person name="Parkhill J."/>
            <person name="Levy S.B."/>
            <person name="Rainey P.B."/>
            <person name="Thomson N.R."/>
        </authorList>
    </citation>
    <scope>NUCLEOTIDE SEQUENCE [LARGE SCALE GENOMIC DNA]</scope>
    <source>
        <strain>SBW25</strain>
    </source>
</reference>
<accession>C3K743</accession>
<name>FABA_PSEFS</name>
<evidence type="ECO:0000255" key="1">
    <source>
        <dbReference type="HAMAP-Rule" id="MF_00405"/>
    </source>
</evidence>